<gene>
    <name evidence="1" type="primary">ybaB</name>
    <name type="ordered locus">EFER_2546</name>
</gene>
<evidence type="ECO:0000255" key="1">
    <source>
        <dbReference type="HAMAP-Rule" id="MF_00274"/>
    </source>
</evidence>
<accession>B7LLP9</accession>
<dbReference type="EMBL" id="CU928158">
    <property type="protein sequence ID" value="CAQ90041.1"/>
    <property type="molecule type" value="Genomic_DNA"/>
</dbReference>
<dbReference type="RefSeq" id="WP_000467098.1">
    <property type="nucleotide sequence ID" value="NC_011740.1"/>
</dbReference>
<dbReference type="SMR" id="B7LLP9"/>
<dbReference type="KEGG" id="efe:EFER_2546"/>
<dbReference type="HOGENOM" id="CLU_140930_0_0_6"/>
<dbReference type="OrthoDB" id="9808738at2"/>
<dbReference type="Proteomes" id="UP000000745">
    <property type="component" value="Chromosome"/>
</dbReference>
<dbReference type="GO" id="GO:0043590">
    <property type="term" value="C:bacterial nucleoid"/>
    <property type="evidence" value="ECO:0007669"/>
    <property type="project" value="UniProtKB-UniRule"/>
</dbReference>
<dbReference type="GO" id="GO:0005829">
    <property type="term" value="C:cytosol"/>
    <property type="evidence" value="ECO:0007669"/>
    <property type="project" value="TreeGrafter"/>
</dbReference>
<dbReference type="GO" id="GO:0003677">
    <property type="term" value="F:DNA binding"/>
    <property type="evidence" value="ECO:0007669"/>
    <property type="project" value="UniProtKB-UniRule"/>
</dbReference>
<dbReference type="FunFam" id="3.30.1310.10:FF:000001">
    <property type="entry name" value="Nucleoid-associated protein YbaB"/>
    <property type="match status" value="1"/>
</dbReference>
<dbReference type="Gene3D" id="3.30.1310.10">
    <property type="entry name" value="Nucleoid-associated protein YbaB-like domain"/>
    <property type="match status" value="1"/>
</dbReference>
<dbReference type="HAMAP" id="MF_00274">
    <property type="entry name" value="DNA_YbaB_EbfC"/>
    <property type="match status" value="1"/>
</dbReference>
<dbReference type="InterPro" id="IPR036894">
    <property type="entry name" value="YbaB-like_sf"/>
</dbReference>
<dbReference type="InterPro" id="IPR004401">
    <property type="entry name" value="YbaB/EbfC"/>
</dbReference>
<dbReference type="NCBIfam" id="TIGR00103">
    <property type="entry name" value="DNA_YbaB_EbfC"/>
    <property type="match status" value="1"/>
</dbReference>
<dbReference type="PANTHER" id="PTHR33449">
    <property type="entry name" value="NUCLEOID-ASSOCIATED PROTEIN YBAB"/>
    <property type="match status" value="1"/>
</dbReference>
<dbReference type="PANTHER" id="PTHR33449:SF1">
    <property type="entry name" value="NUCLEOID-ASSOCIATED PROTEIN YBAB"/>
    <property type="match status" value="1"/>
</dbReference>
<dbReference type="Pfam" id="PF02575">
    <property type="entry name" value="YbaB_DNA_bd"/>
    <property type="match status" value="1"/>
</dbReference>
<dbReference type="PIRSF" id="PIRSF004555">
    <property type="entry name" value="UCP004555"/>
    <property type="match status" value="1"/>
</dbReference>
<dbReference type="SUPFAM" id="SSF82607">
    <property type="entry name" value="YbaB-like"/>
    <property type="match status" value="1"/>
</dbReference>
<comment type="function">
    <text evidence="1">Binds to DNA and alters its conformation. May be involved in regulation of gene expression, nucleoid organization and DNA protection.</text>
</comment>
<comment type="subunit">
    <text evidence="1">Homodimer.</text>
</comment>
<comment type="subcellular location">
    <subcellularLocation>
        <location evidence="1">Cytoplasm</location>
        <location evidence="1">Nucleoid</location>
    </subcellularLocation>
</comment>
<comment type="similarity">
    <text evidence="1">Belongs to the YbaB/EbfC family.</text>
</comment>
<organism>
    <name type="scientific">Escherichia fergusonii (strain ATCC 35469 / DSM 13698 / CCUG 18766 / IAM 14443 / JCM 21226 / LMG 7866 / NBRC 102419 / NCTC 12128 / CDC 0568-73)</name>
    <dbReference type="NCBI Taxonomy" id="585054"/>
    <lineage>
        <taxon>Bacteria</taxon>
        <taxon>Pseudomonadati</taxon>
        <taxon>Pseudomonadota</taxon>
        <taxon>Gammaproteobacteria</taxon>
        <taxon>Enterobacterales</taxon>
        <taxon>Enterobacteriaceae</taxon>
        <taxon>Escherichia</taxon>
    </lineage>
</organism>
<reference key="1">
    <citation type="journal article" date="2009" name="PLoS Genet.">
        <title>Organised genome dynamics in the Escherichia coli species results in highly diverse adaptive paths.</title>
        <authorList>
            <person name="Touchon M."/>
            <person name="Hoede C."/>
            <person name="Tenaillon O."/>
            <person name="Barbe V."/>
            <person name="Baeriswyl S."/>
            <person name="Bidet P."/>
            <person name="Bingen E."/>
            <person name="Bonacorsi S."/>
            <person name="Bouchier C."/>
            <person name="Bouvet O."/>
            <person name="Calteau A."/>
            <person name="Chiapello H."/>
            <person name="Clermont O."/>
            <person name="Cruveiller S."/>
            <person name="Danchin A."/>
            <person name="Diard M."/>
            <person name="Dossat C."/>
            <person name="Karoui M.E."/>
            <person name="Frapy E."/>
            <person name="Garry L."/>
            <person name="Ghigo J.M."/>
            <person name="Gilles A.M."/>
            <person name="Johnson J."/>
            <person name="Le Bouguenec C."/>
            <person name="Lescat M."/>
            <person name="Mangenot S."/>
            <person name="Martinez-Jehanne V."/>
            <person name="Matic I."/>
            <person name="Nassif X."/>
            <person name="Oztas S."/>
            <person name="Petit M.A."/>
            <person name="Pichon C."/>
            <person name="Rouy Z."/>
            <person name="Ruf C.S."/>
            <person name="Schneider D."/>
            <person name="Tourret J."/>
            <person name="Vacherie B."/>
            <person name="Vallenet D."/>
            <person name="Medigue C."/>
            <person name="Rocha E.P.C."/>
            <person name="Denamur E."/>
        </authorList>
    </citation>
    <scope>NUCLEOTIDE SEQUENCE [LARGE SCALE GENOMIC DNA]</scope>
    <source>
        <strain>ATCC 35469 / DSM 13698 / BCRC 15582 / CCUG 18766 / IAM 14443 / JCM 21226 / LMG 7866 / NBRC 102419 / NCTC 12128 / CDC 0568-73</strain>
    </source>
</reference>
<protein>
    <recommendedName>
        <fullName evidence="1">Nucleoid-associated protein YbaB</fullName>
    </recommendedName>
</protein>
<proteinExistence type="inferred from homology"/>
<keyword id="KW-0963">Cytoplasm</keyword>
<keyword id="KW-0238">DNA-binding</keyword>
<feature type="chain" id="PRO_1000119324" description="Nucleoid-associated protein YbaB">
    <location>
        <begin position="1"/>
        <end position="109"/>
    </location>
</feature>
<name>YBAB_ESCF3</name>
<sequence>MFGKGGLGNLMKQAQQMQEKMQKMQEEIAQLEVTGESGAGLVKVTINGAHNCRRVEIDPSLLEDDKEMLEDLVAAAFNDAARRIEETQKEKMASVSSGMQLPPGFKMPF</sequence>